<organism>
    <name type="scientific">Saccharomyces cerevisiae (strain ATCC 204508 / S288c)</name>
    <name type="common">Baker's yeast</name>
    <dbReference type="NCBI Taxonomy" id="559292"/>
    <lineage>
        <taxon>Eukaryota</taxon>
        <taxon>Fungi</taxon>
        <taxon>Dikarya</taxon>
        <taxon>Ascomycota</taxon>
        <taxon>Saccharomycotina</taxon>
        <taxon>Saccharomycetes</taxon>
        <taxon>Saccharomycetales</taxon>
        <taxon>Saccharomycetaceae</taxon>
        <taxon>Saccharomyces</taxon>
    </lineage>
</organism>
<protein>
    <recommendedName>
        <fullName>H/ACA ribonucleoprotein complex subunit NHP2</fullName>
    </recommendedName>
    <alternativeName>
        <fullName>H/ACA snoRNP protein NHP2</fullName>
    </alternativeName>
    <alternativeName>
        <fullName>High mobility group-like nuclear protein 2</fullName>
    </alternativeName>
</protein>
<name>NHP2_YEAST</name>
<gene>
    <name type="primary">NHP2</name>
    <name type="ordered locus">YDL208W</name>
    <name type="ORF">D1045</name>
</gene>
<sequence length="156" mass="17122">MGKDNKEHKESKESKTVDNYEARMPAVLPFAKPLASKKLNKKVLKTVKKASKAKNVKRGVKEVVKALRKGEKGLVVIAGDISPADVISHIPVLCEDHSVPYIFIPSKQDLGAAGATKRPTSVVFIVPGSNKKKDGKNKEEEYKESFNEVVKEVQAL</sequence>
<evidence type="ECO:0000269" key="1">
    <source>
    </source>
</evidence>
<evidence type="ECO:0000269" key="2">
    <source>
    </source>
</evidence>
<evidence type="ECO:0000269" key="3">
    <source>
    </source>
</evidence>
<evidence type="ECO:0000269" key="4">
    <source>
    </source>
</evidence>
<evidence type="ECO:0000269" key="5">
    <source>
    </source>
</evidence>
<evidence type="ECO:0000269" key="6">
    <source>
    </source>
</evidence>
<evidence type="ECO:0000269" key="7">
    <source>
    </source>
</evidence>
<evidence type="ECO:0000269" key="8">
    <source>
    </source>
</evidence>
<evidence type="ECO:0000305" key="9"/>
<evidence type="ECO:0007829" key="10">
    <source>
        <dbReference type="PDB" id="2LBW"/>
    </source>
</evidence>
<evidence type="ECO:0007829" key="11">
    <source>
        <dbReference type="PDB" id="2LBX"/>
    </source>
</evidence>
<keyword id="KW-0002">3D-structure</keyword>
<keyword id="KW-0903">Direct protein sequencing</keyword>
<keyword id="KW-0539">Nucleus</keyword>
<keyword id="KW-1185">Reference proteome</keyword>
<keyword id="KW-0687">Ribonucleoprotein</keyword>
<keyword id="KW-0690">Ribosome biogenesis</keyword>
<keyword id="KW-0694">RNA-binding</keyword>
<keyword id="KW-0698">rRNA processing</keyword>
<accession>P32495</accession>
<accession>D6VRE6</accession>
<feature type="chain" id="PRO_0000136776" description="H/ACA ribonucleoprotein complex subunit NHP2">
    <location>
        <begin position="1"/>
        <end position="156"/>
    </location>
</feature>
<feature type="mutagenesis site" description="No effect." evidence="1">
    <original>V</original>
    <variation>K</variation>
    <location>
        <position position="56"/>
    </location>
</feature>
<feature type="mutagenesis site" description="Significant growth impairment at 30 and 37 degrees Celsius. Impaired association with H/ACA snoRNAs." evidence="1">
    <original>G</original>
    <variation>E</variation>
    <location>
        <position position="59"/>
    </location>
</feature>
<feature type="mutagenesis site" description="No effect." evidence="1">
    <original>R</original>
    <variation>A</variation>
    <location>
        <position position="68"/>
    </location>
</feature>
<feature type="mutagenesis site" description="Lethal. Impaired association with H/ACA snoRNAs. Accumulation of NHP2 within the nucleolus." evidence="1">
    <location>
        <begin position="76"/>
        <end position="77"/>
    </location>
</feature>
<feature type="mutagenesis site" description="No effect." evidence="1">
    <original>D</original>
    <variation>A</variation>
    <location>
        <position position="80"/>
    </location>
</feature>
<feature type="helix" evidence="10">
    <location>
        <begin position="37"/>
        <end position="51"/>
    </location>
</feature>
<feature type="turn" evidence="10">
    <location>
        <begin position="52"/>
        <end position="54"/>
    </location>
</feature>
<feature type="strand" evidence="10">
    <location>
        <begin position="56"/>
        <end position="59"/>
    </location>
</feature>
<feature type="helix" evidence="10">
    <location>
        <begin position="60"/>
        <end position="69"/>
    </location>
</feature>
<feature type="strand" evidence="10">
    <location>
        <begin position="74"/>
        <end position="77"/>
    </location>
</feature>
<feature type="helix" evidence="10">
    <location>
        <begin position="86"/>
        <end position="96"/>
    </location>
</feature>
<feature type="strand" evidence="10">
    <location>
        <begin position="101"/>
        <end position="103"/>
    </location>
</feature>
<feature type="helix" evidence="10">
    <location>
        <begin position="107"/>
        <end position="114"/>
    </location>
</feature>
<feature type="strand" evidence="11">
    <location>
        <begin position="116"/>
        <end position="118"/>
    </location>
</feature>
<feature type="strand" evidence="10">
    <location>
        <begin position="121"/>
        <end position="125"/>
    </location>
</feature>
<feature type="helix" evidence="10">
    <location>
        <begin position="132"/>
        <end position="134"/>
    </location>
</feature>
<feature type="strand" evidence="11">
    <location>
        <begin position="135"/>
        <end position="137"/>
    </location>
</feature>
<feature type="helix" evidence="10">
    <location>
        <begin position="139"/>
        <end position="155"/>
    </location>
</feature>
<comment type="function">
    <text evidence="1 5 7 8">Non-catalytic component of the H/ACA small nucleolar ribonucleoprotein (H/ACA snoRNP), which catalyzes pseudouridylation of rRNA and is required for ribosome biogenesis (PubMed:9843512, PubMed:9848653). This involves the isomerization of uridine such that the ribose is subsequently attached to C5, instead of the normal N1 (PubMed:9843512, PubMed:9848653). Pseudouridine ('psi') residues may serve to stabilize the conformation of rRNAs (PubMed:9843512, PubMed:9848653). The H/ACA snoRNP complex also mediates pseudouridylation of other types of RNAs (PubMed:21131909). The H/ACA snoRNP complex mediates pseudouridylation at position 93 in U2 snRNA (PubMed:21131909). Essential for growth (PubMed:9843512). Directly binds H/ACA snoRNAs (PubMed:11433018).</text>
</comment>
<comment type="subunit">
    <text evidence="2 3 5 6 7 8">Component of the small nucleolar ribonucleoprotein particles containing H/ACA-type snoRNAs (H/ACA snoRNPs) (PubMed:21131909, PubMed:21708174, PubMed:9843512, PubMed:9848653). The protein component of the H/ACA snoRNP contains CBF5, GAR1, NHP2 and NOP10 (PubMed:21131909, PubMed:21708174, PubMed:9843512, PubMed:9848653). The complex contains a stable core composed of CBF5 and NOP10, to which GAR1 and NHP2 subsequently bind (PubMed:21131909, PubMed:21708174, PubMed:9843512, PubMed:9848653). Interacts with SHQ1 (PubMed:12228251). Interacts with NAF1 (PubMed:12515383).</text>
</comment>
<comment type="interaction">
    <interactant intactId="EBI-12014">
        <id>P32495</id>
    </interactant>
    <interactant intactId="EBI-4105">
        <id>P33322</id>
        <label>CBF5</label>
    </interactant>
    <organismsDiffer>false</organismsDiffer>
    <experiments>12</experiments>
</comment>
<comment type="interaction">
    <interactant intactId="EBI-12014">
        <id>P32495</id>
    </interactant>
    <interactant intactId="EBI-7321">
        <id>P28007</id>
        <label>GAR1</label>
    </interactant>
    <organismsDiffer>false</organismsDiffer>
    <experiments>4</experiments>
</comment>
<comment type="interaction">
    <interactant intactId="EBI-12014">
        <id>P32495</id>
    </interactant>
    <interactant intactId="EBI-28887">
        <id>P53919</id>
        <label>NAF1</label>
    </interactant>
    <organismsDiffer>false</organismsDiffer>
    <experiments>4</experiments>
</comment>
<comment type="interaction">
    <interactant intactId="EBI-12014">
        <id>P32495</id>
    </interactant>
    <interactant intactId="EBI-505">
        <id>P53131</id>
        <label>PRP43</label>
    </interactant>
    <organismsDiffer>false</organismsDiffer>
    <experiments>3</experiments>
</comment>
<comment type="subcellular location">
    <subcellularLocation>
        <location evidence="4 7">Nucleus</location>
        <location evidence="4 7">Nucleolus</location>
    </subcellularLocation>
</comment>
<comment type="similarity">
    <text evidence="9">Belongs to the eukaryotic ribosomal protein eL8 family.</text>
</comment>
<comment type="sequence caution" evidence="9">
    <conflict type="erroneous initiation">
        <sequence resource="EMBL-CDS" id="CAA40885"/>
    </conflict>
</comment>
<comment type="sequence caution" evidence="9">
    <conflict type="erroneous initiation">
        <sequence resource="EMBL-CDS" id="CAA67483"/>
    </conflict>
</comment>
<comment type="sequence caution" evidence="9">
    <conflict type="erroneous initiation">
        <sequence resource="EMBL-CDS" id="CAA98786"/>
    </conflict>
</comment>
<reference key="1">
    <citation type="journal article" date="1991" name="Yeast">
        <title>Sequence and genetic analysis of NHP2: a moderately abundant high mobility group-like nuclear protein with an essential function in Saccharomyces cerevisiae.</title>
        <authorList>
            <person name="Kolodrubetz D."/>
            <person name="Burgum A."/>
        </authorList>
    </citation>
    <scope>NUCLEOTIDE SEQUENCE [GENOMIC DNA]</scope>
</reference>
<reference key="2">
    <citation type="journal article" date="1997" name="Yeast">
        <title>The nucleotide sequence of a 39 kb segment of yeast chromosome IV: 12 new open reading frames, nine known genes and one gene for Gly-tRNA.</title>
        <authorList>
            <person name="Bahr A."/>
            <person name="Moeller-Rieker S."/>
            <person name="Hankeln T."/>
            <person name="Kraemer C."/>
            <person name="Protin U."/>
            <person name="Schmidt E.R."/>
        </authorList>
    </citation>
    <scope>NUCLEOTIDE SEQUENCE [GENOMIC DNA]</scope>
    <source>
        <strain>ATCC 96604 / S288c / FY1679</strain>
    </source>
</reference>
<reference key="3">
    <citation type="journal article" date="1997" name="Nature">
        <title>The nucleotide sequence of Saccharomyces cerevisiae chromosome IV.</title>
        <authorList>
            <person name="Jacq C."/>
            <person name="Alt-Moerbe J."/>
            <person name="Andre B."/>
            <person name="Arnold W."/>
            <person name="Bahr A."/>
            <person name="Ballesta J.P.G."/>
            <person name="Bargues M."/>
            <person name="Baron L."/>
            <person name="Becker A."/>
            <person name="Biteau N."/>
            <person name="Bloecker H."/>
            <person name="Blugeon C."/>
            <person name="Boskovic J."/>
            <person name="Brandt P."/>
            <person name="Brueckner M."/>
            <person name="Buitrago M.J."/>
            <person name="Coster F."/>
            <person name="Delaveau T."/>
            <person name="del Rey F."/>
            <person name="Dujon B."/>
            <person name="Eide L.G."/>
            <person name="Garcia-Cantalejo J.M."/>
            <person name="Goffeau A."/>
            <person name="Gomez-Peris A."/>
            <person name="Granotier C."/>
            <person name="Hanemann V."/>
            <person name="Hankeln T."/>
            <person name="Hoheisel J.D."/>
            <person name="Jaeger W."/>
            <person name="Jimenez A."/>
            <person name="Jonniaux J.-L."/>
            <person name="Kraemer C."/>
            <person name="Kuester H."/>
            <person name="Laamanen P."/>
            <person name="Legros Y."/>
            <person name="Louis E.J."/>
            <person name="Moeller-Rieker S."/>
            <person name="Monnet A."/>
            <person name="Moro M."/>
            <person name="Mueller-Auer S."/>
            <person name="Nussbaumer B."/>
            <person name="Paricio N."/>
            <person name="Paulin L."/>
            <person name="Perea J."/>
            <person name="Perez-Alonso M."/>
            <person name="Perez-Ortin J.E."/>
            <person name="Pohl T.M."/>
            <person name="Prydz H."/>
            <person name="Purnelle B."/>
            <person name="Rasmussen S.W."/>
            <person name="Remacha M.A."/>
            <person name="Revuelta J.L."/>
            <person name="Rieger M."/>
            <person name="Salom D."/>
            <person name="Saluz H.P."/>
            <person name="Saiz J.E."/>
            <person name="Saren A.-M."/>
            <person name="Schaefer M."/>
            <person name="Scharfe M."/>
            <person name="Schmidt E.R."/>
            <person name="Schneider C."/>
            <person name="Scholler P."/>
            <person name="Schwarz S."/>
            <person name="Soler-Mira A."/>
            <person name="Urrestarazu L.A."/>
            <person name="Verhasselt P."/>
            <person name="Vissers S."/>
            <person name="Voet M."/>
            <person name="Volckaert G."/>
            <person name="Wagner G."/>
            <person name="Wambutt R."/>
            <person name="Wedler E."/>
            <person name="Wedler H."/>
            <person name="Woelfl S."/>
            <person name="Harris D.E."/>
            <person name="Bowman S."/>
            <person name="Brown D."/>
            <person name="Churcher C.M."/>
            <person name="Connor R."/>
            <person name="Dedman K."/>
            <person name="Gentles S."/>
            <person name="Hamlin N."/>
            <person name="Hunt S."/>
            <person name="Jones L."/>
            <person name="McDonald S."/>
            <person name="Murphy L.D."/>
            <person name="Niblett D."/>
            <person name="Odell C."/>
            <person name="Oliver K."/>
            <person name="Rajandream M.A."/>
            <person name="Richards C."/>
            <person name="Shore L."/>
            <person name="Walsh S.V."/>
            <person name="Barrell B.G."/>
            <person name="Dietrich F.S."/>
            <person name="Mulligan J.T."/>
            <person name="Allen E."/>
            <person name="Araujo R."/>
            <person name="Aviles E."/>
            <person name="Berno A."/>
            <person name="Carpenter J."/>
            <person name="Chen E."/>
            <person name="Cherry J.M."/>
            <person name="Chung E."/>
            <person name="Duncan M."/>
            <person name="Hunicke-Smith S."/>
            <person name="Hyman R.W."/>
            <person name="Komp C."/>
            <person name="Lashkari D."/>
            <person name="Lew H."/>
            <person name="Lin D."/>
            <person name="Mosedale D."/>
            <person name="Nakahara K."/>
            <person name="Namath A."/>
            <person name="Oefner P."/>
            <person name="Oh C."/>
            <person name="Petel F.X."/>
            <person name="Roberts D."/>
            <person name="Schramm S."/>
            <person name="Schroeder M."/>
            <person name="Shogren T."/>
            <person name="Shroff N."/>
            <person name="Winant A."/>
            <person name="Yelton M.A."/>
            <person name="Botstein D."/>
            <person name="Davis R.W."/>
            <person name="Johnston M."/>
            <person name="Andrews S."/>
            <person name="Brinkman R."/>
            <person name="Cooper J."/>
            <person name="Ding H."/>
            <person name="Du Z."/>
            <person name="Favello A."/>
            <person name="Fulton L."/>
            <person name="Gattung S."/>
            <person name="Greco T."/>
            <person name="Hallsworth K."/>
            <person name="Hawkins J."/>
            <person name="Hillier L.W."/>
            <person name="Jier M."/>
            <person name="Johnson D."/>
            <person name="Johnston L."/>
            <person name="Kirsten J."/>
            <person name="Kucaba T."/>
            <person name="Langston Y."/>
            <person name="Latreille P."/>
            <person name="Le T."/>
            <person name="Mardis E."/>
            <person name="Menezes S."/>
            <person name="Miller N."/>
            <person name="Nhan M."/>
            <person name="Pauley A."/>
            <person name="Peluso D."/>
            <person name="Rifkin L."/>
            <person name="Riles L."/>
            <person name="Taich A."/>
            <person name="Trevaskis E."/>
            <person name="Vignati D."/>
            <person name="Wilcox L."/>
            <person name="Wohldman P."/>
            <person name="Vaudin M."/>
            <person name="Wilson R."/>
            <person name="Waterston R."/>
            <person name="Albermann K."/>
            <person name="Hani J."/>
            <person name="Heumann K."/>
            <person name="Kleine K."/>
            <person name="Mewes H.-W."/>
            <person name="Zollner A."/>
            <person name="Zaccaria P."/>
        </authorList>
    </citation>
    <scope>NUCLEOTIDE SEQUENCE [LARGE SCALE GENOMIC DNA]</scope>
    <source>
        <strain>ATCC 204508 / S288c</strain>
    </source>
</reference>
<reference key="4">
    <citation type="journal article" date="2014" name="G3 (Bethesda)">
        <title>The reference genome sequence of Saccharomyces cerevisiae: Then and now.</title>
        <authorList>
            <person name="Engel S.R."/>
            <person name="Dietrich F.S."/>
            <person name="Fisk D.G."/>
            <person name="Binkley G."/>
            <person name="Balakrishnan R."/>
            <person name="Costanzo M.C."/>
            <person name="Dwight S.S."/>
            <person name="Hitz B.C."/>
            <person name="Karra K."/>
            <person name="Nash R.S."/>
            <person name="Weng S."/>
            <person name="Wong E.D."/>
            <person name="Lloyd P."/>
            <person name="Skrzypek M.S."/>
            <person name="Miyasato S.R."/>
            <person name="Simison M."/>
            <person name="Cherry J.M."/>
        </authorList>
    </citation>
    <scope>GENOME REANNOTATION</scope>
    <source>
        <strain>ATCC 204508 / S288c</strain>
    </source>
</reference>
<reference key="5">
    <citation type="journal article" date="1998" name="EMBO J.">
        <title>Nhp2p and Nop10p are essential for the function of H/ACA snoRNPs.</title>
        <authorList>
            <person name="Henras A."/>
            <person name="Henry Y."/>
            <person name="Bousquet-Antonelli C."/>
            <person name="Noaillac-Depeyre J."/>
            <person name="Gelugne J.-P."/>
            <person name="Caizergues-Ferrer M."/>
        </authorList>
    </citation>
    <scope>PROTEIN SEQUENCE OF 1-9</scope>
    <scope>FUNCTION</scope>
    <scope>SUBCELLULAR LOCATION</scope>
    <scope>IDENTIFICATION IN H/ACA SNORNP COMPLEXES</scope>
</reference>
<reference key="6">
    <citation type="journal article" date="1998" name="RNA">
        <title>Cbf5p, a potential pseudouridine synthase, and Nhp2p, a putative RNA-binding protein, are present together with Gar1p in all H BOX/ACA-motif snoRNPs and constitute a common bipartite structure.</title>
        <authorList>
            <person name="Watkins N.J."/>
            <person name="Gottschalk A."/>
            <person name="Neubauer G."/>
            <person name="Kastner B."/>
            <person name="Fabrizio P."/>
            <person name="Mann M."/>
            <person name="Luehrmann R."/>
        </authorList>
    </citation>
    <scope>FUNCTION</scope>
    <scope>IDENTIFICATION BY MASS SPECTROMETRY</scope>
    <scope>IDENTIFICATION IN H/ACA SNORNP COMPLEXES</scope>
</reference>
<reference key="7">
    <citation type="journal article" date="2001" name="Nucleic Acids Res.">
        <title>Accumulation of H/ACA snoRNPs depends on the integrity of the conserved central domain of the RNA-binding protein Nhp2p.</title>
        <authorList>
            <person name="Henras A."/>
            <person name="Dez C."/>
            <person name="Noaillac-Depeyre J."/>
            <person name="Henry Y."/>
            <person name="Caizergues-Ferrer M."/>
        </authorList>
    </citation>
    <scope>FUNCTION</scope>
    <scope>RNA-BINDING</scope>
    <scope>MUTAGENESIS OF VAL-56; GLY-59; ARG-68; 76-VAL-ILE-77 AND ASP-80</scope>
</reference>
<reference key="8">
    <citation type="journal article" date="2002" name="J. Biol. Chem.">
        <title>The Shq1p.Naf1p complex is required for box H/ACA small nucleolar ribonucleoprotein particle biogenesis.</title>
        <authorList>
            <person name="Yang P.K."/>
            <person name="Rotondo G."/>
            <person name="Porras T."/>
            <person name="Legrain P."/>
            <person name="Chanfreau G."/>
        </authorList>
    </citation>
    <scope>INTERACTION WITH SHQ1</scope>
</reference>
<reference key="9">
    <citation type="journal article" date="2002" name="RNA">
        <title>Naf1 p is a box H/ACA snoRNP assembly factor.</title>
        <authorList>
            <person name="Fatica A."/>
            <person name="Dlakic M."/>
            <person name="Tollervey D."/>
        </authorList>
    </citation>
    <scope>INTERACTION WITH NAF1</scope>
</reference>
<reference key="10">
    <citation type="journal article" date="2003" name="Nature">
        <title>Global analysis of protein localization in budding yeast.</title>
        <authorList>
            <person name="Huh W.-K."/>
            <person name="Falvo J.V."/>
            <person name="Gerke L.C."/>
            <person name="Carroll A.S."/>
            <person name="Howson R.W."/>
            <person name="Weissman J.S."/>
            <person name="O'Shea E.K."/>
        </authorList>
    </citation>
    <scope>SUBCELLULAR LOCATION [LARGE SCALE ANALYSIS]</scope>
</reference>
<reference key="11">
    <citation type="journal article" date="2004" name="RNA">
        <title>Cbf5p, the putative pseudouridine synthase of H/ACA-type snoRNPs, can form a complex with Gar1p and Nop10p in absence of Nhp2p and box H/ACA snoRNAs.</title>
        <authorList>
            <person name="Henras A.K."/>
            <person name="Capeyrou R."/>
            <person name="Henry Y."/>
            <person name="Caizergues-Ferrer M."/>
        </authorList>
    </citation>
    <scope>CHARACTERIZATION OF THE H/ACA SNORNP COMPLEX</scope>
</reference>
<reference key="12">
    <citation type="journal article" date="2011" name="EMBO J.">
        <title>U2 snRNA is inducibly pseudouridylated at novel sites by Pus7p and snR81 RNP.</title>
        <authorList>
            <person name="Wu G."/>
            <person name="Xiao M."/>
            <person name="Yang C."/>
            <person name="Yu Y.T."/>
        </authorList>
    </citation>
    <scope>FUNCTION</scope>
    <scope>IDENTIFICATION IN THE H/ACA SNORNP COMPLEX</scope>
</reference>
<reference key="13">
    <citation type="journal article" date="2011" name="J. Mol. Biol.">
        <title>Structure of H/ACA RNP protein Nhp2p reveals cis/trans isomerization of a conserved proline at the RNA and Nop10 binding interface.</title>
        <authorList>
            <person name="Koo B.K."/>
            <person name="Park C.J."/>
            <person name="Fernandez C.F."/>
            <person name="Chim N."/>
            <person name="Ding Y."/>
            <person name="Chanfreau G."/>
            <person name="Feigon J."/>
        </authorList>
    </citation>
    <scope>STRUCTURE BY NMR OF 36-156</scope>
    <scope>SUBUNIT</scope>
</reference>
<proteinExistence type="evidence at protein level"/>
<dbReference type="EMBL" id="X57714">
    <property type="protein sequence ID" value="CAA40885.1"/>
    <property type="status" value="ALT_INIT"/>
    <property type="molecule type" value="Genomic_DNA"/>
</dbReference>
<dbReference type="EMBL" id="X99000">
    <property type="protein sequence ID" value="CAA67483.1"/>
    <property type="status" value="ALT_INIT"/>
    <property type="molecule type" value="Genomic_DNA"/>
</dbReference>
<dbReference type="EMBL" id="Z74256">
    <property type="protein sequence ID" value="CAA98786.1"/>
    <property type="status" value="ALT_INIT"/>
    <property type="molecule type" value="Genomic_DNA"/>
</dbReference>
<dbReference type="EMBL" id="BK006938">
    <property type="protein sequence ID" value="DAA11656.1"/>
    <property type="molecule type" value="Genomic_DNA"/>
</dbReference>
<dbReference type="PIR" id="S67767">
    <property type="entry name" value="S67767"/>
</dbReference>
<dbReference type="RefSeq" id="NP_010073.2">
    <property type="nucleotide sequence ID" value="NM_001180268.1"/>
</dbReference>
<dbReference type="PDB" id="2LBW">
    <property type="method" value="NMR"/>
    <property type="chains" value="A=36-156"/>
</dbReference>
<dbReference type="PDB" id="2LBX">
    <property type="method" value="NMR"/>
    <property type="chains" value="A=36-156"/>
</dbReference>
<dbReference type="PDBsum" id="2LBW"/>
<dbReference type="PDBsum" id="2LBX"/>
<dbReference type="BMRB" id="P32495"/>
<dbReference type="SMR" id="P32495"/>
<dbReference type="BioGRID" id="31838">
    <property type="interactions" value="312"/>
</dbReference>
<dbReference type="ComplexPortal" id="CPX-737">
    <property type="entry name" value="Box H/ACA ribonucleoprotein complex"/>
</dbReference>
<dbReference type="DIP" id="DIP-5134N"/>
<dbReference type="FunCoup" id="P32495">
    <property type="interactions" value="774"/>
</dbReference>
<dbReference type="IntAct" id="P32495">
    <property type="interactions" value="69"/>
</dbReference>
<dbReference type="MINT" id="P32495"/>
<dbReference type="STRING" id="4932.YDL208W"/>
<dbReference type="iPTMnet" id="P32495"/>
<dbReference type="PaxDb" id="4932-YDL208W"/>
<dbReference type="PeptideAtlas" id="P32495"/>
<dbReference type="EnsemblFungi" id="YDL208W_mRNA">
    <property type="protein sequence ID" value="YDL208W"/>
    <property type="gene ID" value="YDL208W"/>
</dbReference>
<dbReference type="GeneID" id="851319"/>
<dbReference type="KEGG" id="sce:YDL208W"/>
<dbReference type="AGR" id="SGD:S000002367"/>
<dbReference type="SGD" id="S000002367">
    <property type="gene designation" value="NHP2"/>
</dbReference>
<dbReference type="VEuPathDB" id="FungiDB:YDL208W"/>
<dbReference type="eggNOG" id="KOG3167">
    <property type="taxonomic scope" value="Eukaryota"/>
</dbReference>
<dbReference type="GeneTree" id="ENSGT00550000074939"/>
<dbReference type="HOGENOM" id="CLU_084513_1_1_1"/>
<dbReference type="InParanoid" id="P32495"/>
<dbReference type="OMA" id="EDNYEAR"/>
<dbReference type="OrthoDB" id="5364946at2759"/>
<dbReference type="BioCyc" id="MetaCyc:G3O-29590-MONOMER"/>
<dbReference type="BioCyc" id="YEAST:G3O-29590-MONOMER"/>
<dbReference type="BioGRID-ORCS" id="851319">
    <property type="hits" value="7 hits in 10 CRISPR screens"/>
</dbReference>
<dbReference type="CD-CODE" id="BDAE0F88">
    <property type="entry name" value="Nucleolus"/>
</dbReference>
<dbReference type="EvolutionaryTrace" id="P32495"/>
<dbReference type="PRO" id="PR:P32495"/>
<dbReference type="Proteomes" id="UP000002311">
    <property type="component" value="Chromosome IV"/>
</dbReference>
<dbReference type="RNAct" id="P32495">
    <property type="molecule type" value="protein"/>
</dbReference>
<dbReference type="GO" id="GO:0031429">
    <property type="term" value="C:box H/ACA snoRNP complex"/>
    <property type="evidence" value="ECO:0000314"/>
    <property type="project" value="UniProtKB"/>
</dbReference>
<dbReference type="GO" id="GO:0005730">
    <property type="term" value="C:nucleolus"/>
    <property type="evidence" value="ECO:0000314"/>
    <property type="project" value="GO_Central"/>
</dbReference>
<dbReference type="GO" id="GO:0005732">
    <property type="term" value="C:sno(s)RNA-containing ribonucleoprotein complex"/>
    <property type="evidence" value="ECO:0000314"/>
    <property type="project" value="UniProtKB"/>
</dbReference>
<dbReference type="GO" id="GO:0034513">
    <property type="term" value="F:box H/ACA snoRNA binding"/>
    <property type="evidence" value="ECO:0000314"/>
    <property type="project" value="SGD"/>
</dbReference>
<dbReference type="GO" id="GO:0000493">
    <property type="term" value="P:box H/ACA snoRNP assembly"/>
    <property type="evidence" value="ECO:0000315"/>
    <property type="project" value="UniProtKB"/>
</dbReference>
<dbReference type="GO" id="GO:0006364">
    <property type="term" value="P:rRNA processing"/>
    <property type="evidence" value="ECO:0000315"/>
    <property type="project" value="SGD"/>
</dbReference>
<dbReference type="GO" id="GO:0031118">
    <property type="term" value="P:rRNA pseudouridine synthesis"/>
    <property type="evidence" value="ECO:0000315"/>
    <property type="project" value="SGD"/>
</dbReference>
<dbReference type="GO" id="GO:0000454">
    <property type="term" value="P:snoRNA guided rRNA pseudouridine synthesis"/>
    <property type="evidence" value="ECO:0000314"/>
    <property type="project" value="ComplexPortal"/>
</dbReference>
<dbReference type="GO" id="GO:0031120">
    <property type="term" value="P:snRNA pseudouridine synthesis"/>
    <property type="evidence" value="ECO:0000314"/>
    <property type="project" value="UniProtKB"/>
</dbReference>
<dbReference type="FunFam" id="3.30.1330.30:FF:000015">
    <property type="entry name" value="H/ACA ribonucleoprotein complex subunit NHP2"/>
    <property type="match status" value="1"/>
</dbReference>
<dbReference type="Gene3D" id="3.30.1330.30">
    <property type="match status" value="1"/>
</dbReference>
<dbReference type="InterPro" id="IPR050257">
    <property type="entry name" value="eL8/uL1-like"/>
</dbReference>
<dbReference type="InterPro" id="IPR002415">
    <property type="entry name" value="H/ACA_rnp_Nhp2-like"/>
</dbReference>
<dbReference type="InterPro" id="IPR029064">
    <property type="entry name" value="Ribosomal_eL30-like_sf"/>
</dbReference>
<dbReference type="InterPro" id="IPR004037">
    <property type="entry name" value="Ribosomal_eL8-like_CS"/>
</dbReference>
<dbReference type="InterPro" id="IPR004038">
    <property type="entry name" value="Ribosomal_eL8/eL30/eS12/Gad45"/>
</dbReference>
<dbReference type="InterPro" id="IPR018492">
    <property type="entry name" value="Ribosomal_eL8/Nhp2"/>
</dbReference>
<dbReference type="PANTHER" id="PTHR23105">
    <property type="entry name" value="RIBOSOMAL PROTEIN L7AE FAMILY MEMBER"/>
    <property type="match status" value="1"/>
</dbReference>
<dbReference type="Pfam" id="PF01248">
    <property type="entry name" value="Ribosomal_L7Ae"/>
    <property type="match status" value="1"/>
</dbReference>
<dbReference type="PRINTS" id="PR00881">
    <property type="entry name" value="L7ARS6FAMILY"/>
</dbReference>
<dbReference type="PRINTS" id="PR00883">
    <property type="entry name" value="NUCLEARHMG"/>
</dbReference>
<dbReference type="SUPFAM" id="SSF55315">
    <property type="entry name" value="L30e-like"/>
    <property type="match status" value="1"/>
</dbReference>
<dbReference type="PROSITE" id="PS01082">
    <property type="entry name" value="RIBOSOMAL_L7AE"/>
    <property type="match status" value="1"/>
</dbReference>